<sequence length="438" mass="47056">MADYQDKNVVIIGLGLTGLSCVDFFLARGVTPRVMDTRVTPPGLDKLPQEVERHVGGLNDEWLLAADLIVASPGIALAHPSLSAAASAGVEIVGDIELFCREAQEPIVAITGSNGKSTVTTLVGEMAKAAGVNVGVGGNIGLPALMLLDADRELYVLELSSFQLETTSSLQAAAATVLNVTEDHMDRYPFGLQQYRAAKLRVYEKAKVCVVNADDALTMPVRGADERCVSFGVNMGDYHLNRQQGETWLRVKGEKVLNVKEMKLSGQHNYTNALAALALADAVGLPRASSLKALTTFTGLAHRFQLALEHNGVRWINDSKATNVGSTEAALNGLHVDGTLHLLLGGDGKSADFSPLTRYLTGDRIRLYCFGRDGAQLAALRPEIAQQTETMEEAMRLLAPRVQPGDMVLLSPACASLDQFKNFEQRGDVFTRLAKELG</sequence>
<reference key="1">
    <citation type="journal article" date="2005" name="Nucleic Acids Res.">
        <title>The genome sequence of Salmonella enterica serovar Choleraesuis, a highly invasive and resistant zoonotic pathogen.</title>
        <authorList>
            <person name="Chiu C.-H."/>
            <person name="Tang P."/>
            <person name="Chu C."/>
            <person name="Hu S."/>
            <person name="Bao Q."/>
            <person name="Yu J."/>
            <person name="Chou Y.-Y."/>
            <person name="Wang H.-S."/>
            <person name="Lee Y.-S."/>
        </authorList>
    </citation>
    <scope>NUCLEOTIDE SEQUENCE [LARGE SCALE GENOMIC DNA]</scope>
    <source>
        <strain>SC-B67</strain>
    </source>
</reference>
<name>MURD_SALCH</name>
<keyword id="KW-0067">ATP-binding</keyword>
<keyword id="KW-0131">Cell cycle</keyword>
<keyword id="KW-0132">Cell division</keyword>
<keyword id="KW-0133">Cell shape</keyword>
<keyword id="KW-0961">Cell wall biogenesis/degradation</keyword>
<keyword id="KW-0963">Cytoplasm</keyword>
<keyword id="KW-0436">Ligase</keyword>
<keyword id="KW-0547">Nucleotide-binding</keyword>
<keyword id="KW-0573">Peptidoglycan synthesis</keyword>
<evidence type="ECO:0000255" key="1">
    <source>
        <dbReference type="HAMAP-Rule" id="MF_00639"/>
    </source>
</evidence>
<proteinExistence type="inferred from homology"/>
<comment type="function">
    <text evidence="1">Cell wall formation. Catalyzes the addition of glutamate to the nucleotide precursor UDP-N-acetylmuramoyl-L-alanine (UMA).</text>
</comment>
<comment type="catalytic activity">
    <reaction evidence="1">
        <text>UDP-N-acetyl-alpha-D-muramoyl-L-alanine + D-glutamate + ATP = UDP-N-acetyl-alpha-D-muramoyl-L-alanyl-D-glutamate + ADP + phosphate + H(+)</text>
        <dbReference type="Rhea" id="RHEA:16429"/>
        <dbReference type="ChEBI" id="CHEBI:15378"/>
        <dbReference type="ChEBI" id="CHEBI:29986"/>
        <dbReference type="ChEBI" id="CHEBI:30616"/>
        <dbReference type="ChEBI" id="CHEBI:43474"/>
        <dbReference type="ChEBI" id="CHEBI:83898"/>
        <dbReference type="ChEBI" id="CHEBI:83900"/>
        <dbReference type="ChEBI" id="CHEBI:456216"/>
        <dbReference type="EC" id="6.3.2.9"/>
    </reaction>
</comment>
<comment type="pathway">
    <text evidence="1">Cell wall biogenesis; peptidoglycan biosynthesis.</text>
</comment>
<comment type="subcellular location">
    <subcellularLocation>
        <location evidence="1">Cytoplasm</location>
    </subcellularLocation>
</comment>
<comment type="similarity">
    <text evidence="1">Belongs to the MurCDEF family.</text>
</comment>
<gene>
    <name evidence="1" type="primary">murD</name>
    <name type="ordered locus">SCH_0123</name>
</gene>
<feature type="chain" id="PRO_0000109075" description="UDP-N-acetylmuramoylalanine--D-glutamate ligase">
    <location>
        <begin position="1"/>
        <end position="438"/>
    </location>
</feature>
<feature type="binding site" evidence="1">
    <location>
        <begin position="112"/>
        <end position="118"/>
    </location>
    <ligand>
        <name>ATP</name>
        <dbReference type="ChEBI" id="CHEBI:30616"/>
    </ligand>
</feature>
<protein>
    <recommendedName>
        <fullName evidence="1">UDP-N-acetylmuramoylalanine--D-glutamate ligase</fullName>
        <ecNumber evidence="1">6.3.2.9</ecNumber>
    </recommendedName>
    <alternativeName>
        <fullName evidence="1">D-glutamic acid-adding enzyme</fullName>
    </alternativeName>
    <alternativeName>
        <fullName evidence="1">UDP-N-acetylmuramoyl-L-alanyl-D-glutamate synthetase</fullName>
    </alternativeName>
</protein>
<dbReference type="EC" id="6.3.2.9" evidence="1"/>
<dbReference type="EMBL" id="AE017220">
    <property type="protein sequence ID" value="AAX64029.1"/>
    <property type="molecule type" value="Genomic_DNA"/>
</dbReference>
<dbReference type="RefSeq" id="WP_000796446.1">
    <property type="nucleotide sequence ID" value="NC_006905.1"/>
</dbReference>
<dbReference type="SMR" id="Q57TD2"/>
<dbReference type="KEGG" id="sec:SCH_0123"/>
<dbReference type="HOGENOM" id="CLU_032540_1_0_6"/>
<dbReference type="UniPathway" id="UPA00219"/>
<dbReference type="Proteomes" id="UP000000538">
    <property type="component" value="Chromosome"/>
</dbReference>
<dbReference type="GO" id="GO:0005737">
    <property type="term" value="C:cytoplasm"/>
    <property type="evidence" value="ECO:0007669"/>
    <property type="project" value="UniProtKB-SubCell"/>
</dbReference>
<dbReference type="GO" id="GO:0005524">
    <property type="term" value="F:ATP binding"/>
    <property type="evidence" value="ECO:0007669"/>
    <property type="project" value="UniProtKB-UniRule"/>
</dbReference>
<dbReference type="GO" id="GO:0008764">
    <property type="term" value="F:UDP-N-acetylmuramoylalanine-D-glutamate ligase activity"/>
    <property type="evidence" value="ECO:0007669"/>
    <property type="project" value="UniProtKB-UniRule"/>
</dbReference>
<dbReference type="GO" id="GO:0051301">
    <property type="term" value="P:cell division"/>
    <property type="evidence" value="ECO:0007669"/>
    <property type="project" value="UniProtKB-KW"/>
</dbReference>
<dbReference type="GO" id="GO:0071555">
    <property type="term" value="P:cell wall organization"/>
    <property type="evidence" value="ECO:0007669"/>
    <property type="project" value="UniProtKB-KW"/>
</dbReference>
<dbReference type="GO" id="GO:0009252">
    <property type="term" value="P:peptidoglycan biosynthetic process"/>
    <property type="evidence" value="ECO:0007669"/>
    <property type="project" value="UniProtKB-UniRule"/>
</dbReference>
<dbReference type="GO" id="GO:0008360">
    <property type="term" value="P:regulation of cell shape"/>
    <property type="evidence" value="ECO:0007669"/>
    <property type="project" value="UniProtKB-KW"/>
</dbReference>
<dbReference type="FunFam" id="3.40.1190.10:FF:000002">
    <property type="entry name" value="UDP-N-acetylmuramoylalanine--D-glutamate ligase"/>
    <property type="match status" value="1"/>
</dbReference>
<dbReference type="FunFam" id="3.40.50.720:FF:000126">
    <property type="entry name" value="UDP-N-acetylmuramoylalanine--D-glutamate ligase"/>
    <property type="match status" value="1"/>
</dbReference>
<dbReference type="FunFam" id="3.90.190.20:FF:000003">
    <property type="entry name" value="UDP-N-acetylmuramoylalanine--D-glutamate ligase"/>
    <property type="match status" value="1"/>
</dbReference>
<dbReference type="Gene3D" id="3.90.190.20">
    <property type="entry name" value="Mur ligase, C-terminal domain"/>
    <property type="match status" value="1"/>
</dbReference>
<dbReference type="Gene3D" id="3.40.1190.10">
    <property type="entry name" value="Mur-like, catalytic domain"/>
    <property type="match status" value="1"/>
</dbReference>
<dbReference type="Gene3D" id="3.40.50.720">
    <property type="entry name" value="NAD(P)-binding Rossmann-like Domain"/>
    <property type="match status" value="1"/>
</dbReference>
<dbReference type="HAMAP" id="MF_00639">
    <property type="entry name" value="MurD"/>
    <property type="match status" value="1"/>
</dbReference>
<dbReference type="InterPro" id="IPR036565">
    <property type="entry name" value="Mur-like_cat_sf"/>
</dbReference>
<dbReference type="InterPro" id="IPR004101">
    <property type="entry name" value="Mur_ligase_C"/>
</dbReference>
<dbReference type="InterPro" id="IPR036615">
    <property type="entry name" value="Mur_ligase_C_dom_sf"/>
</dbReference>
<dbReference type="InterPro" id="IPR013221">
    <property type="entry name" value="Mur_ligase_cen"/>
</dbReference>
<dbReference type="InterPro" id="IPR005762">
    <property type="entry name" value="MurD"/>
</dbReference>
<dbReference type="NCBIfam" id="TIGR01087">
    <property type="entry name" value="murD"/>
    <property type="match status" value="1"/>
</dbReference>
<dbReference type="PANTHER" id="PTHR43692">
    <property type="entry name" value="UDP-N-ACETYLMURAMOYLALANINE--D-GLUTAMATE LIGASE"/>
    <property type="match status" value="1"/>
</dbReference>
<dbReference type="PANTHER" id="PTHR43692:SF1">
    <property type="entry name" value="UDP-N-ACETYLMURAMOYLALANINE--D-GLUTAMATE LIGASE"/>
    <property type="match status" value="1"/>
</dbReference>
<dbReference type="Pfam" id="PF02875">
    <property type="entry name" value="Mur_ligase_C"/>
    <property type="match status" value="1"/>
</dbReference>
<dbReference type="Pfam" id="PF08245">
    <property type="entry name" value="Mur_ligase_M"/>
    <property type="match status" value="1"/>
</dbReference>
<dbReference type="Pfam" id="PF21799">
    <property type="entry name" value="MurD-like_N"/>
    <property type="match status" value="1"/>
</dbReference>
<dbReference type="SUPFAM" id="SSF51984">
    <property type="entry name" value="MurCD N-terminal domain"/>
    <property type="match status" value="1"/>
</dbReference>
<dbReference type="SUPFAM" id="SSF53623">
    <property type="entry name" value="MurD-like peptide ligases, catalytic domain"/>
    <property type="match status" value="1"/>
</dbReference>
<dbReference type="SUPFAM" id="SSF53244">
    <property type="entry name" value="MurD-like peptide ligases, peptide-binding domain"/>
    <property type="match status" value="1"/>
</dbReference>
<accession>Q57TD2</accession>
<organism>
    <name type="scientific">Salmonella choleraesuis (strain SC-B67)</name>
    <dbReference type="NCBI Taxonomy" id="321314"/>
    <lineage>
        <taxon>Bacteria</taxon>
        <taxon>Pseudomonadati</taxon>
        <taxon>Pseudomonadota</taxon>
        <taxon>Gammaproteobacteria</taxon>
        <taxon>Enterobacterales</taxon>
        <taxon>Enterobacteriaceae</taxon>
        <taxon>Salmonella</taxon>
    </lineage>
</organism>